<keyword id="KW-0067">ATP-binding</keyword>
<keyword id="KW-0963">Cytoplasm</keyword>
<keyword id="KW-0418">Kinase</keyword>
<keyword id="KW-0547">Nucleotide-binding</keyword>
<keyword id="KW-0539">Nucleus</keyword>
<keyword id="KW-0589">Pheromone response</keyword>
<keyword id="KW-1185">Reference proteome</keyword>
<keyword id="KW-0723">Serine/threonine-protein kinase</keyword>
<keyword id="KW-0808">Transferase</keyword>
<dbReference type="EC" id="2.7.11.1"/>
<dbReference type="EMBL" id="CR380957">
    <property type="protein sequence ID" value="CAG61302.1"/>
    <property type="molecule type" value="Genomic_DNA"/>
</dbReference>
<dbReference type="RefSeq" id="XP_448341.1">
    <property type="nucleotide sequence ID" value="XM_448341.1"/>
</dbReference>
<dbReference type="SMR" id="Q6FN53"/>
<dbReference type="FunCoup" id="Q6FN53">
    <property type="interactions" value="496"/>
</dbReference>
<dbReference type="STRING" id="284593.Q6FN53"/>
<dbReference type="EnsemblFungi" id="CAGL0K02673g-T">
    <property type="protein sequence ID" value="CAGL0K02673g-T-p1"/>
    <property type="gene ID" value="CAGL0K02673g"/>
</dbReference>
<dbReference type="GeneID" id="2890268"/>
<dbReference type="KEGG" id="cgr:2890268"/>
<dbReference type="CGD" id="CAL0134517">
    <property type="gene designation" value="STE20"/>
</dbReference>
<dbReference type="VEuPathDB" id="FungiDB:CAGL0K02673g"/>
<dbReference type="eggNOG" id="KOG0578">
    <property type="taxonomic scope" value="Eukaryota"/>
</dbReference>
<dbReference type="HOGENOM" id="CLU_000288_26_3_1"/>
<dbReference type="InParanoid" id="Q6FN53"/>
<dbReference type="OMA" id="YNAKHVH"/>
<dbReference type="Proteomes" id="UP000002428">
    <property type="component" value="Chromosome K"/>
</dbReference>
<dbReference type="GO" id="GO:0005737">
    <property type="term" value="C:cytoplasm"/>
    <property type="evidence" value="ECO:0007669"/>
    <property type="project" value="UniProtKB-SubCell"/>
</dbReference>
<dbReference type="GO" id="GO:0005634">
    <property type="term" value="C:nucleus"/>
    <property type="evidence" value="ECO:0007669"/>
    <property type="project" value="UniProtKB-SubCell"/>
</dbReference>
<dbReference type="GO" id="GO:0005524">
    <property type="term" value="F:ATP binding"/>
    <property type="evidence" value="ECO:0007669"/>
    <property type="project" value="UniProtKB-KW"/>
</dbReference>
<dbReference type="GO" id="GO:0008349">
    <property type="term" value="F:MAP kinase kinase kinase kinase activity"/>
    <property type="evidence" value="ECO:0000316"/>
    <property type="project" value="CGD"/>
</dbReference>
<dbReference type="GO" id="GO:0106310">
    <property type="term" value="F:protein serine kinase activity"/>
    <property type="evidence" value="ECO:0007669"/>
    <property type="project" value="RHEA"/>
</dbReference>
<dbReference type="GO" id="GO:0071470">
    <property type="term" value="P:cellular response to osmotic stress"/>
    <property type="evidence" value="ECO:0000315"/>
    <property type="project" value="CGD"/>
</dbReference>
<dbReference type="GO" id="GO:0031505">
    <property type="term" value="P:fungal-type cell wall organization"/>
    <property type="evidence" value="ECO:0000315"/>
    <property type="project" value="CGD"/>
</dbReference>
<dbReference type="GO" id="GO:0019236">
    <property type="term" value="P:response to pheromone"/>
    <property type="evidence" value="ECO:0007669"/>
    <property type="project" value="UniProtKB-KW"/>
</dbReference>
<dbReference type="GO" id="GO:0001402">
    <property type="term" value="P:signal transduction involved in filamentous growth"/>
    <property type="evidence" value="ECO:0000316"/>
    <property type="project" value="CGD"/>
</dbReference>
<dbReference type="CDD" id="cd01093">
    <property type="entry name" value="CRIB_PAK_like"/>
    <property type="match status" value="1"/>
</dbReference>
<dbReference type="CDD" id="cd06614">
    <property type="entry name" value="STKc_PAK"/>
    <property type="match status" value="1"/>
</dbReference>
<dbReference type="FunFam" id="1.10.510.10:FF:000011">
    <property type="entry name" value="Non-specific serine/threonine protein kinase"/>
    <property type="match status" value="1"/>
</dbReference>
<dbReference type="FunFam" id="3.30.200.20:FF:000385">
    <property type="entry name" value="Non-specific serine/threonine protein kinase"/>
    <property type="match status" value="1"/>
</dbReference>
<dbReference type="FunFam" id="3.90.810.10:FF:000007">
    <property type="entry name" value="Non-specific serine/threonine protein kinase"/>
    <property type="match status" value="1"/>
</dbReference>
<dbReference type="Gene3D" id="3.90.810.10">
    <property type="entry name" value="CRIB domain"/>
    <property type="match status" value="1"/>
</dbReference>
<dbReference type="Gene3D" id="3.30.200.20">
    <property type="entry name" value="Phosphorylase Kinase, domain 1"/>
    <property type="match status" value="1"/>
</dbReference>
<dbReference type="Gene3D" id="1.10.510.10">
    <property type="entry name" value="Transferase(Phosphotransferase) domain 1"/>
    <property type="match status" value="1"/>
</dbReference>
<dbReference type="InterPro" id="IPR000095">
    <property type="entry name" value="CRIB_dom"/>
</dbReference>
<dbReference type="InterPro" id="IPR036936">
    <property type="entry name" value="CRIB_dom_sf"/>
</dbReference>
<dbReference type="InterPro" id="IPR011009">
    <property type="entry name" value="Kinase-like_dom_sf"/>
</dbReference>
<dbReference type="InterPro" id="IPR051931">
    <property type="entry name" value="PAK3-like"/>
</dbReference>
<dbReference type="InterPro" id="IPR033923">
    <property type="entry name" value="PAK_BD"/>
</dbReference>
<dbReference type="InterPro" id="IPR000719">
    <property type="entry name" value="Prot_kinase_dom"/>
</dbReference>
<dbReference type="InterPro" id="IPR017441">
    <property type="entry name" value="Protein_kinase_ATP_BS"/>
</dbReference>
<dbReference type="InterPro" id="IPR008271">
    <property type="entry name" value="Ser/Thr_kinase_AS"/>
</dbReference>
<dbReference type="PANTHER" id="PTHR45832">
    <property type="entry name" value="SERINE/THREONINE-PROTEIN KINASE SAMKA-RELATED-RELATED"/>
    <property type="match status" value="1"/>
</dbReference>
<dbReference type="PANTHER" id="PTHR45832:SF22">
    <property type="entry name" value="SERINE_THREONINE-PROTEIN KINASE SAMKA-RELATED"/>
    <property type="match status" value="1"/>
</dbReference>
<dbReference type="Pfam" id="PF00786">
    <property type="entry name" value="PBD"/>
    <property type="match status" value="1"/>
</dbReference>
<dbReference type="Pfam" id="PF00069">
    <property type="entry name" value="Pkinase"/>
    <property type="match status" value="1"/>
</dbReference>
<dbReference type="SMART" id="SM00285">
    <property type="entry name" value="PBD"/>
    <property type="match status" value="1"/>
</dbReference>
<dbReference type="SMART" id="SM00220">
    <property type="entry name" value="S_TKc"/>
    <property type="match status" value="1"/>
</dbReference>
<dbReference type="SUPFAM" id="SSF56112">
    <property type="entry name" value="Protein kinase-like (PK-like)"/>
    <property type="match status" value="1"/>
</dbReference>
<dbReference type="PROSITE" id="PS50108">
    <property type="entry name" value="CRIB"/>
    <property type="match status" value="1"/>
</dbReference>
<dbReference type="PROSITE" id="PS00107">
    <property type="entry name" value="PROTEIN_KINASE_ATP"/>
    <property type="match status" value="1"/>
</dbReference>
<dbReference type="PROSITE" id="PS50011">
    <property type="entry name" value="PROTEIN_KINASE_DOM"/>
    <property type="match status" value="1"/>
</dbReference>
<dbReference type="PROSITE" id="PS00108">
    <property type="entry name" value="PROTEIN_KINASE_ST"/>
    <property type="match status" value="1"/>
</dbReference>
<reference key="1">
    <citation type="journal article" date="2004" name="Nature">
        <title>Genome evolution in yeasts.</title>
        <authorList>
            <person name="Dujon B."/>
            <person name="Sherman D."/>
            <person name="Fischer G."/>
            <person name="Durrens P."/>
            <person name="Casaregola S."/>
            <person name="Lafontaine I."/>
            <person name="de Montigny J."/>
            <person name="Marck C."/>
            <person name="Neuveglise C."/>
            <person name="Talla E."/>
            <person name="Goffard N."/>
            <person name="Frangeul L."/>
            <person name="Aigle M."/>
            <person name="Anthouard V."/>
            <person name="Babour A."/>
            <person name="Barbe V."/>
            <person name="Barnay S."/>
            <person name="Blanchin S."/>
            <person name="Beckerich J.-M."/>
            <person name="Beyne E."/>
            <person name="Bleykasten C."/>
            <person name="Boisrame A."/>
            <person name="Boyer J."/>
            <person name="Cattolico L."/>
            <person name="Confanioleri F."/>
            <person name="de Daruvar A."/>
            <person name="Despons L."/>
            <person name="Fabre E."/>
            <person name="Fairhead C."/>
            <person name="Ferry-Dumazet H."/>
            <person name="Groppi A."/>
            <person name="Hantraye F."/>
            <person name="Hennequin C."/>
            <person name="Jauniaux N."/>
            <person name="Joyet P."/>
            <person name="Kachouri R."/>
            <person name="Kerrest A."/>
            <person name="Koszul R."/>
            <person name="Lemaire M."/>
            <person name="Lesur I."/>
            <person name="Ma L."/>
            <person name="Muller H."/>
            <person name="Nicaud J.-M."/>
            <person name="Nikolski M."/>
            <person name="Oztas S."/>
            <person name="Ozier-Kalogeropoulos O."/>
            <person name="Pellenz S."/>
            <person name="Potier S."/>
            <person name="Richard G.-F."/>
            <person name="Straub M.-L."/>
            <person name="Suleau A."/>
            <person name="Swennen D."/>
            <person name="Tekaia F."/>
            <person name="Wesolowski-Louvel M."/>
            <person name="Westhof E."/>
            <person name="Wirth B."/>
            <person name="Zeniou-Meyer M."/>
            <person name="Zivanovic Y."/>
            <person name="Bolotin-Fukuhara M."/>
            <person name="Thierry A."/>
            <person name="Bouchier C."/>
            <person name="Caudron B."/>
            <person name="Scarpelli C."/>
            <person name="Gaillardin C."/>
            <person name="Weissenbach J."/>
            <person name="Wincker P."/>
            <person name="Souciet J.-L."/>
        </authorList>
    </citation>
    <scope>NUCLEOTIDE SEQUENCE [LARGE SCALE GENOMIC DNA]</scope>
    <source>
        <strain>ATCC 2001 / BCRC 20586 / JCM 3761 / NBRC 0622 / NRRL Y-65 / CBS 138</strain>
    </source>
</reference>
<reference key="2">
    <citation type="journal article" date="2004" name="Yeast">
        <title>Candida glabrata Ste20 is involved in maintaining cell wall integrity and adaptation to hypertonic stress, and is required for wild-type levels of virulence.</title>
        <authorList>
            <person name="Calcagno A.-M."/>
            <person name="Bignell E."/>
            <person name="Rogers T.R."/>
            <person name="Canedo M."/>
            <person name="Muehlschlegel F.A."/>
            <person name="Haynes K."/>
        </authorList>
    </citation>
    <scope>FUNCTION</scope>
</reference>
<organism>
    <name type="scientific">Candida glabrata (strain ATCC 2001 / BCRC 20586 / JCM 3761 / NBRC 0622 / NRRL Y-65 / CBS 138)</name>
    <name type="common">Yeast</name>
    <name type="synonym">Nakaseomyces glabratus</name>
    <dbReference type="NCBI Taxonomy" id="284593"/>
    <lineage>
        <taxon>Eukaryota</taxon>
        <taxon>Fungi</taxon>
        <taxon>Dikarya</taxon>
        <taxon>Ascomycota</taxon>
        <taxon>Saccharomycotina</taxon>
        <taxon>Saccharomycetes</taxon>
        <taxon>Saccharomycetales</taxon>
        <taxon>Saccharomycetaceae</taxon>
        <taxon>Nakaseomyces</taxon>
    </lineage>
</organism>
<evidence type="ECO:0000250" key="1"/>
<evidence type="ECO:0000255" key="2">
    <source>
        <dbReference type="PROSITE-ProRule" id="PRU00057"/>
    </source>
</evidence>
<evidence type="ECO:0000255" key="3">
    <source>
        <dbReference type="PROSITE-ProRule" id="PRU00159"/>
    </source>
</evidence>
<evidence type="ECO:0000255" key="4">
    <source>
        <dbReference type="PROSITE-ProRule" id="PRU10027"/>
    </source>
</evidence>
<evidence type="ECO:0000256" key="5">
    <source>
        <dbReference type="SAM" id="MobiDB-lite"/>
    </source>
</evidence>
<evidence type="ECO:0000269" key="6">
    <source>
    </source>
</evidence>
<evidence type="ECO:0000305" key="7"/>
<accession>Q6FN53</accession>
<protein>
    <recommendedName>
        <fullName>Serine/threonine-protein kinase STE20</fullName>
        <ecNumber>2.7.11.1</ecNumber>
    </recommendedName>
</protein>
<comment type="function">
    <text evidence="1 6">MAP4K component of the MAPK pathway required for the mating pheromone response and the regulation of cell polarity and cell cycle. Phosphorylates histone H2B to form H2BS10ph (By similarity). Involved in cell wall integrity, hypertonic stress adaptation and virulence.</text>
</comment>
<comment type="catalytic activity">
    <reaction>
        <text>L-seryl-[protein] + ATP = O-phospho-L-seryl-[protein] + ADP + H(+)</text>
        <dbReference type="Rhea" id="RHEA:17989"/>
        <dbReference type="Rhea" id="RHEA-COMP:9863"/>
        <dbReference type="Rhea" id="RHEA-COMP:11604"/>
        <dbReference type="ChEBI" id="CHEBI:15378"/>
        <dbReference type="ChEBI" id="CHEBI:29999"/>
        <dbReference type="ChEBI" id="CHEBI:30616"/>
        <dbReference type="ChEBI" id="CHEBI:83421"/>
        <dbReference type="ChEBI" id="CHEBI:456216"/>
        <dbReference type="EC" id="2.7.11.1"/>
    </reaction>
</comment>
<comment type="catalytic activity">
    <reaction>
        <text>L-threonyl-[protein] + ATP = O-phospho-L-threonyl-[protein] + ADP + H(+)</text>
        <dbReference type="Rhea" id="RHEA:46608"/>
        <dbReference type="Rhea" id="RHEA-COMP:11060"/>
        <dbReference type="Rhea" id="RHEA-COMP:11605"/>
        <dbReference type="ChEBI" id="CHEBI:15378"/>
        <dbReference type="ChEBI" id="CHEBI:30013"/>
        <dbReference type="ChEBI" id="CHEBI:30616"/>
        <dbReference type="ChEBI" id="CHEBI:61977"/>
        <dbReference type="ChEBI" id="CHEBI:456216"/>
        <dbReference type="EC" id="2.7.11.1"/>
    </reaction>
</comment>
<comment type="subcellular location">
    <subcellularLocation>
        <location evidence="1">Cytoplasm</location>
    </subcellularLocation>
    <subcellularLocation>
        <location evidence="1">Nucleus</location>
    </subcellularLocation>
</comment>
<comment type="similarity">
    <text evidence="7">Belongs to the protein kinase superfamily. STE Ser/Thr protein kinase family. STE20 subfamily.</text>
</comment>
<gene>
    <name type="primary">STE20</name>
    <name type="ordered locus">CAGL0K02673g</name>
</gene>
<name>STE20_CANGA</name>
<feature type="chain" id="PRO_0000237628" description="Serine/threonine-protein kinase STE20">
    <location>
        <begin position="1"/>
        <end position="915"/>
    </location>
</feature>
<feature type="domain" description="CRIB" evidence="2">
    <location>
        <begin position="335"/>
        <end position="348"/>
    </location>
</feature>
<feature type="domain" description="Protein kinase" evidence="3">
    <location>
        <begin position="620"/>
        <end position="871"/>
    </location>
</feature>
<feature type="region of interest" description="Disordered" evidence="5">
    <location>
        <begin position="73"/>
        <end position="109"/>
    </location>
</feature>
<feature type="region of interest" description="Disordered" evidence="5">
    <location>
        <begin position="180"/>
        <end position="338"/>
    </location>
</feature>
<feature type="region of interest" description="Disordered" evidence="5">
    <location>
        <begin position="427"/>
        <end position="503"/>
    </location>
</feature>
<feature type="region of interest" description="Disordered" evidence="5">
    <location>
        <begin position="534"/>
        <end position="598"/>
    </location>
</feature>
<feature type="region of interest" description="Disordered" evidence="5">
    <location>
        <begin position="894"/>
        <end position="915"/>
    </location>
</feature>
<feature type="compositionally biased region" description="Low complexity" evidence="5">
    <location>
        <begin position="73"/>
        <end position="82"/>
    </location>
</feature>
<feature type="compositionally biased region" description="Polar residues" evidence="5">
    <location>
        <begin position="184"/>
        <end position="233"/>
    </location>
</feature>
<feature type="compositionally biased region" description="Polar residues" evidence="5">
    <location>
        <begin position="243"/>
        <end position="252"/>
    </location>
</feature>
<feature type="compositionally biased region" description="Polar residues" evidence="5">
    <location>
        <begin position="260"/>
        <end position="284"/>
    </location>
</feature>
<feature type="compositionally biased region" description="Low complexity" evidence="5">
    <location>
        <begin position="318"/>
        <end position="331"/>
    </location>
</feature>
<feature type="compositionally biased region" description="Polar residues" evidence="5">
    <location>
        <begin position="431"/>
        <end position="447"/>
    </location>
</feature>
<feature type="compositionally biased region" description="Low complexity" evidence="5">
    <location>
        <begin position="448"/>
        <end position="462"/>
    </location>
</feature>
<feature type="compositionally biased region" description="Polar residues" evidence="5">
    <location>
        <begin position="492"/>
        <end position="503"/>
    </location>
</feature>
<feature type="compositionally biased region" description="Basic and acidic residues" evidence="5">
    <location>
        <begin position="587"/>
        <end position="598"/>
    </location>
</feature>
<feature type="compositionally biased region" description="Acidic residues" evidence="5">
    <location>
        <begin position="895"/>
        <end position="909"/>
    </location>
</feature>
<feature type="active site" description="Proton acceptor" evidence="3 4">
    <location>
        <position position="739"/>
    </location>
</feature>
<feature type="binding site" evidence="3">
    <location>
        <begin position="626"/>
        <end position="634"/>
    </location>
    <ligand>
        <name>ATP</name>
        <dbReference type="ChEBI" id="CHEBI:30616"/>
    </ligand>
</feature>
<feature type="binding site" evidence="3">
    <location>
        <position position="649"/>
    </location>
    <ligand>
        <name>ATP</name>
        <dbReference type="ChEBI" id="CHEBI:30616"/>
    </ligand>
</feature>
<sequence length="915" mass="100411">MSNANQKENVPSLGLPRTHGTLNVNALKATDILKHKGKLNEVNSDQSTTNENDEVQEEAVFLDDPVHFTRVSSSSELSAALSVNTTEQEQDEEKGTEHAELEPAEEDTVEVDTIRNNGDKTYSTIRESASDFETTNNTLIEISKNSSTYSSTEFLNNNNNGISNSNRATIDSESKLRMNKLREGSSTSLSNDSNGFNGMISSNQASTVLSTPSQKPSSTTNTITKANNGGSTRAQKEKHTSPKLPSTVTAPSSHRKSADLSKTNKLPSTTAKRTPKQAVTSSSPKEPAKRKSSTSKMKGMFSSLVQNMKRNSSDNRKSASSLSSVSSSSSSTLKISTPYNPKHIYHVGVDARTGEYTGLPEEWERLLASSGISRKEQQQNMQAVIDIVNFYQDVADHTGEEKVIKTFDPKKQNPLVRDSLSKYEQVDDNRTSYASGGTPTLEQNGFHTSSTPRSRTSLTSPTAGYSMISTPPMATQEKYIPTRPAPKPPGQQTPSSNASLTPKMQNATMSPIKENISSPVTKSEVDDELLLSKKNASLPKLPSDDSSSHKKSATDSAPTSVETDTETVKVPPIPKTTPTVPAKASRRSNEKKKEERERNKKLLYAKLTEICSPGDPKSKYRDLIKIGQGASGGVYIAHDTESEDSVAIKQMNLEKQPKKELILNEILVMRESKHSNIVNFIDSYLAKGDLWIVMEYMEGGSLTDVVTHCLLSEGQIGAVCRETLKGLQFLHSKGVLHRDIKSDNILLSLKGNIKLTDFGFCAQINENNLKRTTMVGTPYWMAPEVVSRKEYGPKVDIWSLGIMIIEMIEGEPPYLNETPLRALYLIATNGTPKLKEPEALSDTLTKFLDWCLKVDPSERATATELLDDPFITEIAEDNSSLSPLVKLARIKKLEEQEEDAGTDETEPETTPDTTI</sequence>
<proteinExistence type="inferred from homology"/>